<name>MDH_MYCTO</name>
<reference key="1">
    <citation type="journal article" date="2002" name="J. Bacteriol.">
        <title>Whole-genome comparison of Mycobacterium tuberculosis clinical and laboratory strains.</title>
        <authorList>
            <person name="Fleischmann R.D."/>
            <person name="Alland D."/>
            <person name="Eisen J.A."/>
            <person name="Carpenter L."/>
            <person name="White O."/>
            <person name="Peterson J.D."/>
            <person name="DeBoy R.T."/>
            <person name="Dodson R.J."/>
            <person name="Gwinn M.L."/>
            <person name="Haft D.H."/>
            <person name="Hickey E.K."/>
            <person name="Kolonay J.F."/>
            <person name="Nelson W.C."/>
            <person name="Umayam L.A."/>
            <person name="Ermolaeva M.D."/>
            <person name="Salzberg S.L."/>
            <person name="Delcher A."/>
            <person name="Utterback T.R."/>
            <person name="Weidman J.F."/>
            <person name="Khouri H.M."/>
            <person name="Gill J."/>
            <person name="Mikula A."/>
            <person name="Bishai W."/>
            <person name="Jacobs W.R. Jr."/>
            <person name="Venter J.C."/>
            <person name="Fraser C.M."/>
        </authorList>
    </citation>
    <scope>NUCLEOTIDE SEQUENCE [LARGE SCALE GENOMIC DNA]</scope>
    <source>
        <strain>CDC 1551 / Oshkosh</strain>
    </source>
</reference>
<organism>
    <name type="scientific">Mycobacterium tuberculosis (strain CDC 1551 / Oshkosh)</name>
    <dbReference type="NCBI Taxonomy" id="83331"/>
    <lineage>
        <taxon>Bacteria</taxon>
        <taxon>Bacillati</taxon>
        <taxon>Actinomycetota</taxon>
        <taxon>Actinomycetes</taxon>
        <taxon>Mycobacteriales</taxon>
        <taxon>Mycobacteriaceae</taxon>
        <taxon>Mycobacterium</taxon>
        <taxon>Mycobacterium tuberculosis complex</taxon>
    </lineage>
</organism>
<gene>
    <name evidence="1" type="primary">mdh</name>
    <name type="ordered locus">MT1278</name>
</gene>
<keyword id="KW-0520">NAD</keyword>
<keyword id="KW-0560">Oxidoreductase</keyword>
<keyword id="KW-1185">Reference proteome</keyword>
<keyword id="KW-0816">Tricarboxylic acid cycle</keyword>
<feature type="chain" id="PRO_0000427734" description="Malate dehydrogenase">
    <location>
        <begin position="1"/>
        <end position="329"/>
    </location>
</feature>
<feature type="active site" description="Proton acceptor" evidence="1">
    <location>
        <position position="188"/>
    </location>
</feature>
<feature type="binding site" evidence="1">
    <location>
        <begin position="12"/>
        <end position="18"/>
    </location>
    <ligand>
        <name>NAD(+)</name>
        <dbReference type="ChEBI" id="CHEBI:57540"/>
    </ligand>
</feature>
<feature type="binding site" evidence="1">
    <location>
        <position position="93"/>
    </location>
    <ligand>
        <name>substrate</name>
    </ligand>
</feature>
<feature type="binding site" evidence="1">
    <location>
        <position position="99"/>
    </location>
    <ligand>
        <name>substrate</name>
    </ligand>
</feature>
<feature type="binding site" evidence="1">
    <location>
        <position position="106"/>
    </location>
    <ligand>
        <name>NAD(+)</name>
        <dbReference type="ChEBI" id="CHEBI:57540"/>
    </ligand>
</feature>
<feature type="binding site" evidence="1">
    <location>
        <position position="113"/>
    </location>
    <ligand>
        <name>NAD(+)</name>
        <dbReference type="ChEBI" id="CHEBI:57540"/>
    </ligand>
</feature>
<feature type="binding site" evidence="1">
    <location>
        <begin position="130"/>
        <end position="132"/>
    </location>
    <ligand>
        <name>NAD(+)</name>
        <dbReference type="ChEBI" id="CHEBI:57540"/>
    </ligand>
</feature>
<feature type="binding site" evidence="1">
    <location>
        <position position="132"/>
    </location>
    <ligand>
        <name>substrate</name>
    </ligand>
</feature>
<feature type="binding site" evidence="1">
    <location>
        <position position="163"/>
    </location>
    <ligand>
        <name>substrate</name>
    </ligand>
</feature>
<proteinExistence type="inferred from homology"/>
<dbReference type="EC" id="1.1.1.37" evidence="1"/>
<dbReference type="EMBL" id="AE000516">
    <property type="protein sequence ID" value="AAK45536.1"/>
    <property type="molecule type" value="Genomic_DNA"/>
</dbReference>
<dbReference type="PIR" id="G70952">
    <property type="entry name" value="G70952"/>
</dbReference>
<dbReference type="RefSeq" id="WP_003406301.1">
    <property type="nucleotide sequence ID" value="NZ_KK341227.1"/>
</dbReference>
<dbReference type="SMR" id="P9WK12"/>
<dbReference type="KEGG" id="mtc:MT1278"/>
<dbReference type="PATRIC" id="fig|83331.31.peg.1381"/>
<dbReference type="HOGENOM" id="CLU_040727_2_0_11"/>
<dbReference type="Proteomes" id="UP000001020">
    <property type="component" value="Chromosome"/>
</dbReference>
<dbReference type="GO" id="GO:0030060">
    <property type="term" value="F:L-malate dehydrogenase (NAD+) activity"/>
    <property type="evidence" value="ECO:0007669"/>
    <property type="project" value="UniProtKB-UniRule"/>
</dbReference>
<dbReference type="GO" id="GO:0006108">
    <property type="term" value="P:malate metabolic process"/>
    <property type="evidence" value="ECO:0007669"/>
    <property type="project" value="InterPro"/>
</dbReference>
<dbReference type="GO" id="GO:0006099">
    <property type="term" value="P:tricarboxylic acid cycle"/>
    <property type="evidence" value="ECO:0007669"/>
    <property type="project" value="UniProtKB-UniRule"/>
</dbReference>
<dbReference type="CDD" id="cd01338">
    <property type="entry name" value="MDH_chloroplast-like"/>
    <property type="match status" value="1"/>
</dbReference>
<dbReference type="FunFam" id="3.40.50.720:FF:000010">
    <property type="entry name" value="Malate dehydrogenase"/>
    <property type="match status" value="1"/>
</dbReference>
<dbReference type="FunFam" id="3.90.110.10:FF:000002">
    <property type="entry name" value="Malate dehydrogenase"/>
    <property type="match status" value="1"/>
</dbReference>
<dbReference type="Gene3D" id="3.90.110.10">
    <property type="entry name" value="Lactate dehydrogenase/glycoside hydrolase, family 4, C-terminal"/>
    <property type="match status" value="1"/>
</dbReference>
<dbReference type="Gene3D" id="3.40.50.720">
    <property type="entry name" value="NAD(P)-binding Rossmann-like Domain"/>
    <property type="match status" value="1"/>
</dbReference>
<dbReference type="HAMAP" id="MF_01517">
    <property type="entry name" value="Malate_dehydrog_2"/>
    <property type="match status" value="1"/>
</dbReference>
<dbReference type="InterPro" id="IPR001557">
    <property type="entry name" value="L-lactate/malate_DH"/>
</dbReference>
<dbReference type="InterPro" id="IPR022383">
    <property type="entry name" value="Lactate/malate_DH_C"/>
</dbReference>
<dbReference type="InterPro" id="IPR001236">
    <property type="entry name" value="Lactate/malate_DH_N"/>
</dbReference>
<dbReference type="InterPro" id="IPR015955">
    <property type="entry name" value="Lactate_DH/Glyco_Ohase_4_C"/>
</dbReference>
<dbReference type="InterPro" id="IPR001252">
    <property type="entry name" value="Malate_DH_AS"/>
</dbReference>
<dbReference type="InterPro" id="IPR010945">
    <property type="entry name" value="Malate_DH_type2"/>
</dbReference>
<dbReference type="InterPro" id="IPR036291">
    <property type="entry name" value="NAD(P)-bd_dom_sf"/>
</dbReference>
<dbReference type="NCBIfam" id="TIGR01759">
    <property type="entry name" value="MalateDH-SF1"/>
    <property type="match status" value="1"/>
</dbReference>
<dbReference type="NCBIfam" id="NF003916">
    <property type="entry name" value="PRK05442.1"/>
    <property type="match status" value="1"/>
</dbReference>
<dbReference type="PANTHER" id="PTHR23382">
    <property type="entry name" value="MALATE DEHYDROGENASE"/>
    <property type="match status" value="1"/>
</dbReference>
<dbReference type="Pfam" id="PF02866">
    <property type="entry name" value="Ldh_1_C"/>
    <property type="match status" value="1"/>
</dbReference>
<dbReference type="Pfam" id="PF00056">
    <property type="entry name" value="Ldh_1_N"/>
    <property type="match status" value="1"/>
</dbReference>
<dbReference type="PIRSF" id="PIRSF000102">
    <property type="entry name" value="Lac_mal_DH"/>
    <property type="match status" value="1"/>
</dbReference>
<dbReference type="SUPFAM" id="SSF56327">
    <property type="entry name" value="LDH C-terminal domain-like"/>
    <property type="match status" value="1"/>
</dbReference>
<dbReference type="SUPFAM" id="SSF51735">
    <property type="entry name" value="NAD(P)-binding Rossmann-fold domains"/>
    <property type="match status" value="1"/>
</dbReference>
<dbReference type="PROSITE" id="PS00068">
    <property type="entry name" value="MDH"/>
    <property type="match status" value="1"/>
</dbReference>
<sequence>MSASPLKVAVTGAAGQIGYSLLFRLASGSLLGPDRPIELRLLEIEPALQALEGVVMELDDCAFPLLSGVEIGSDPQKIFDGVSLALLVGARPRGAGMERSDLLEANGAIFTAQGKALNAVAADDVRVGVTGNPANTNALIAMTNAPDIPRERFSALTRLDHNRAISQLAAKTGAAVTDIKKMTIWGNHSATQYPDLFHAEVAGKNAAEVVNDQAWIEDEFIPTVAKRGAAIIDARGASSAASAASATIDAARDWLLGTPADDWVSMAVVSDGSYGVPEGLISSFPVTTKGGNWTIVSGLEIDEFSRGRIDKSTAELADERSAVTELGLI</sequence>
<evidence type="ECO:0000255" key="1">
    <source>
        <dbReference type="HAMAP-Rule" id="MF_01517"/>
    </source>
</evidence>
<accession>P9WK12</accession>
<accession>L0T626</accession>
<accession>O54592</accession>
<accession>P0A5J6</accession>
<comment type="function">
    <text evidence="1">Catalyzes the reversible oxidation of malate to oxaloacetate.</text>
</comment>
<comment type="catalytic activity">
    <reaction evidence="1">
        <text>(S)-malate + NAD(+) = oxaloacetate + NADH + H(+)</text>
        <dbReference type="Rhea" id="RHEA:21432"/>
        <dbReference type="ChEBI" id="CHEBI:15378"/>
        <dbReference type="ChEBI" id="CHEBI:15589"/>
        <dbReference type="ChEBI" id="CHEBI:16452"/>
        <dbReference type="ChEBI" id="CHEBI:57540"/>
        <dbReference type="ChEBI" id="CHEBI:57945"/>
        <dbReference type="EC" id="1.1.1.37"/>
    </reaction>
</comment>
<comment type="similarity">
    <text evidence="1">Belongs to the LDH/MDH superfamily. MDH type 2 family.</text>
</comment>
<protein>
    <recommendedName>
        <fullName evidence="1">Malate dehydrogenase</fullName>
        <ecNumber evidence="1">1.1.1.37</ecNumber>
    </recommendedName>
</protein>